<name>UBIE_BRUA2</name>
<reference key="1">
    <citation type="journal article" date="2005" name="Infect. Immun.">
        <title>Whole-genome analyses of speciation events in pathogenic Brucellae.</title>
        <authorList>
            <person name="Chain P.S."/>
            <person name="Comerci D.J."/>
            <person name="Tolmasky M.E."/>
            <person name="Larimer F.W."/>
            <person name="Malfatti S.A."/>
            <person name="Vergez L.M."/>
            <person name="Aguero F."/>
            <person name="Land M.L."/>
            <person name="Ugalde R.A."/>
            <person name="Garcia E."/>
        </authorList>
    </citation>
    <scope>NUCLEOTIDE SEQUENCE [LARGE SCALE GENOMIC DNA]</scope>
    <source>
        <strain>2308</strain>
    </source>
</reference>
<keyword id="KW-0474">Menaquinone biosynthesis</keyword>
<keyword id="KW-0489">Methyltransferase</keyword>
<keyword id="KW-1185">Reference proteome</keyword>
<keyword id="KW-0949">S-adenosyl-L-methionine</keyword>
<keyword id="KW-0808">Transferase</keyword>
<keyword id="KW-0831">Ubiquinone biosynthesis</keyword>
<evidence type="ECO:0000255" key="1">
    <source>
        <dbReference type="HAMAP-Rule" id="MF_01813"/>
    </source>
</evidence>
<accession>Q2YJM4</accession>
<dbReference type="EC" id="2.1.1.163" evidence="1"/>
<dbReference type="EC" id="2.1.1.201" evidence="1"/>
<dbReference type="EMBL" id="AM040265">
    <property type="protein sequence ID" value="CAJ13192.1"/>
    <property type="molecule type" value="Genomic_DNA"/>
</dbReference>
<dbReference type="RefSeq" id="WP_002965588.1">
    <property type="nucleotide sequence ID" value="NZ_KN046823.1"/>
</dbReference>
<dbReference type="SMR" id="Q2YJM4"/>
<dbReference type="STRING" id="359391.BAB2_1026"/>
<dbReference type="GeneID" id="97534890"/>
<dbReference type="KEGG" id="bmf:BAB2_1026"/>
<dbReference type="PATRIC" id="fig|359391.11.peg.714"/>
<dbReference type="HOGENOM" id="CLU_037990_0_0_5"/>
<dbReference type="PhylomeDB" id="Q2YJM4"/>
<dbReference type="UniPathway" id="UPA00079">
    <property type="reaction ID" value="UER00169"/>
</dbReference>
<dbReference type="UniPathway" id="UPA00232"/>
<dbReference type="Proteomes" id="UP000002719">
    <property type="component" value="Chromosome II"/>
</dbReference>
<dbReference type="GO" id="GO:0008425">
    <property type="term" value="F:2-methoxy-6-polyprenyl-1,4-benzoquinol methyltransferase activity"/>
    <property type="evidence" value="ECO:0007669"/>
    <property type="project" value="UniProtKB-UniRule"/>
</dbReference>
<dbReference type="GO" id="GO:0043770">
    <property type="term" value="F:demethylmenaquinone methyltransferase activity"/>
    <property type="evidence" value="ECO:0007669"/>
    <property type="project" value="UniProtKB-UniRule"/>
</dbReference>
<dbReference type="GO" id="GO:0009060">
    <property type="term" value="P:aerobic respiration"/>
    <property type="evidence" value="ECO:0007669"/>
    <property type="project" value="UniProtKB-UniRule"/>
</dbReference>
<dbReference type="GO" id="GO:0009234">
    <property type="term" value="P:menaquinone biosynthetic process"/>
    <property type="evidence" value="ECO:0007669"/>
    <property type="project" value="UniProtKB-UniRule"/>
</dbReference>
<dbReference type="GO" id="GO:0032259">
    <property type="term" value="P:methylation"/>
    <property type="evidence" value="ECO:0007669"/>
    <property type="project" value="UniProtKB-KW"/>
</dbReference>
<dbReference type="CDD" id="cd02440">
    <property type="entry name" value="AdoMet_MTases"/>
    <property type="match status" value="1"/>
</dbReference>
<dbReference type="FunFam" id="3.40.50.150:FF:000064">
    <property type="entry name" value="2-methoxy-6-polyprenyl-1,4-benzoquinol methylase, mitochondrial"/>
    <property type="match status" value="1"/>
</dbReference>
<dbReference type="Gene3D" id="3.40.50.150">
    <property type="entry name" value="Vaccinia Virus protein VP39"/>
    <property type="match status" value="1"/>
</dbReference>
<dbReference type="HAMAP" id="MF_01813">
    <property type="entry name" value="MenG_UbiE_methyltr"/>
    <property type="match status" value="1"/>
</dbReference>
<dbReference type="InterPro" id="IPR029063">
    <property type="entry name" value="SAM-dependent_MTases_sf"/>
</dbReference>
<dbReference type="InterPro" id="IPR004033">
    <property type="entry name" value="UbiE/COQ5_MeTrFase"/>
</dbReference>
<dbReference type="InterPro" id="IPR023576">
    <property type="entry name" value="UbiE/COQ5_MeTrFase_CS"/>
</dbReference>
<dbReference type="NCBIfam" id="TIGR01934">
    <property type="entry name" value="MenG_MenH_UbiE"/>
    <property type="match status" value="1"/>
</dbReference>
<dbReference type="NCBIfam" id="NF001242">
    <property type="entry name" value="PRK00216.1-3"/>
    <property type="match status" value="1"/>
</dbReference>
<dbReference type="NCBIfam" id="NF001244">
    <property type="entry name" value="PRK00216.1-5"/>
    <property type="match status" value="1"/>
</dbReference>
<dbReference type="PANTHER" id="PTHR43591:SF24">
    <property type="entry name" value="2-METHOXY-6-POLYPRENYL-1,4-BENZOQUINOL METHYLASE, MITOCHONDRIAL"/>
    <property type="match status" value="1"/>
</dbReference>
<dbReference type="PANTHER" id="PTHR43591">
    <property type="entry name" value="METHYLTRANSFERASE"/>
    <property type="match status" value="1"/>
</dbReference>
<dbReference type="Pfam" id="PF01209">
    <property type="entry name" value="Ubie_methyltran"/>
    <property type="match status" value="1"/>
</dbReference>
<dbReference type="SUPFAM" id="SSF53335">
    <property type="entry name" value="S-adenosyl-L-methionine-dependent methyltransferases"/>
    <property type="match status" value="1"/>
</dbReference>
<dbReference type="PROSITE" id="PS51608">
    <property type="entry name" value="SAM_MT_UBIE"/>
    <property type="match status" value="1"/>
</dbReference>
<dbReference type="PROSITE" id="PS01183">
    <property type="entry name" value="UBIE_1"/>
    <property type="match status" value="1"/>
</dbReference>
<dbReference type="PROSITE" id="PS01184">
    <property type="entry name" value="UBIE_2"/>
    <property type="match status" value="1"/>
</dbReference>
<organism>
    <name type="scientific">Brucella abortus (strain 2308)</name>
    <dbReference type="NCBI Taxonomy" id="359391"/>
    <lineage>
        <taxon>Bacteria</taxon>
        <taxon>Pseudomonadati</taxon>
        <taxon>Pseudomonadota</taxon>
        <taxon>Alphaproteobacteria</taxon>
        <taxon>Hyphomicrobiales</taxon>
        <taxon>Brucellaceae</taxon>
        <taxon>Brucella/Ochrobactrum group</taxon>
        <taxon>Brucella</taxon>
    </lineage>
</organism>
<proteinExistence type="inferred from homology"/>
<gene>
    <name evidence="1" type="primary">ubiE</name>
    <name type="ordered locus">BAB2_1026</name>
</gene>
<feature type="chain" id="PRO_1000088274" description="Ubiquinone/menaquinone biosynthesis C-methyltransferase UbiE">
    <location>
        <begin position="1"/>
        <end position="269"/>
    </location>
</feature>
<feature type="binding site" evidence="1">
    <location>
        <position position="92"/>
    </location>
    <ligand>
        <name>S-adenosyl-L-methionine</name>
        <dbReference type="ChEBI" id="CHEBI:59789"/>
    </ligand>
</feature>
<feature type="binding site" evidence="1">
    <location>
        <position position="113"/>
    </location>
    <ligand>
        <name>S-adenosyl-L-methionine</name>
        <dbReference type="ChEBI" id="CHEBI:59789"/>
    </ligand>
</feature>
<feature type="binding site" evidence="1">
    <location>
        <begin position="141"/>
        <end position="142"/>
    </location>
    <ligand>
        <name>S-adenosyl-L-methionine</name>
        <dbReference type="ChEBI" id="CHEBI:59789"/>
    </ligand>
</feature>
<comment type="function">
    <text evidence="1">Methyltransferase required for the conversion of demethylmenaquinol (DMKH2) to menaquinol (MKH2) and the conversion of 2-polyprenyl-6-methoxy-1,4-benzoquinol (DDMQH2) to 2-polyprenyl-3-methyl-6-methoxy-1,4-benzoquinol (DMQH2).</text>
</comment>
<comment type="catalytic activity">
    <reaction evidence="1">
        <text>a 2-demethylmenaquinol + S-adenosyl-L-methionine = a menaquinol + S-adenosyl-L-homocysteine + H(+)</text>
        <dbReference type="Rhea" id="RHEA:42640"/>
        <dbReference type="Rhea" id="RHEA-COMP:9539"/>
        <dbReference type="Rhea" id="RHEA-COMP:9563"/>
        <dbReference type="ChEBI" id="CHEBI:15378"/>
        <dbReference type="ChEBI" id="CHEBI:18151"/>
        <dbReference type="ChEBI" id="CHEBI:55437"/>
        <dbReference type="ChEBI" id="CHEBI:57856"/>
        <dbReference type="ChEBI" id="CHEBI:59789"/>
        <dbReference type="EC" id="2.1.1.163"/>
    </reaction>
</comment>
<comment type="catalytic activity">
    <reaction evidence="1">
        <text>a 2-methoxy-6-(all-trans-polyprenyl)benzene-1,4-diol + S-adenosyl-L-methionine = a 5-methoxy-2-methyl-3-(all-trans-polyprenyl)benzene-1,4-diol + S-adenosyl-L-homocysteine + H(+)</text>
        <dbReference type="Rhea" id="RHEA:28286"/>
        <dbReference type="Rhea" id="RHEA-COMP:10858"/>
        <dbReference type="Rhea" id="RHEA-COMP:10859"/>
        <dbReference type="ChEBI" id="CHEBI:15378"/>
        <dbReference type="ChEBI" id="CHEBI:57856"/>
        <dbReference type="ChEBI" id="CHEBI:59789"/>
        <dbReference type="ChEBI" id="CHEBI:84166"/>
        <dbReference type="ChEBI" id="CHEBI:84167"/>
        <dbReference type="EC" id="2.1.1.201"/>
    </reaction>
</comment>
<comment type="pathway">
    <text evidence="1">Quinol/quinone metabolism; menaquinone biosynthesis; menaquinol from 1,4-dihydroxy-2-naphthoate: step 2/2.</text>
</comment>
<comment type="pathway">
    <text evidence="1">Cofactor biosynthesis; ubiquinone biosynthesis.</text>
</comment>
<comment type="similarity">
    <text evidence="1">Belongs to the class I-like SAM-binding methyltransferase superfamily. MenG/UbiE family.</text>
</comment>
<protein>
    <recommendedName>
        <fullName evidence="1">Ubiquinone/menaquinone biosynthesis C-methyltransferase UbiE</fullName>
        <ecNumber evidence="1">2.1.1.163</ecNumber>
        <ecNumber evidence="1">2.1.1.201</ecNumber>
    </recommendedName>
    <alternativeName>
        <fullName evidence="1">2-methoxy-6-polyprenyl-1,4-benzoquinol methylase</fullName>
    </alternativeName>
    <alternativeName>
        <fullName evidence="1">Demethylmenaquinone methyltransferase</fullName>
    </alternativeName>
</protein>
<sequence>MSQQNGNVNRVGAQDRVGASGGMEHSFGFKAVDENEKQGLVNDVFHKVAKRYDIMNDLMSAGMHRVWKDAMVAWLAPSKRPGWTSLDVAGGTGDIAFRIVEASGRQAHVTILDINGSMLGVGRERAIKKGLIDNLEFVEANAEELPFEDNSFDAYTIAFGIRNVPHIDKALSEAYRVLKPGGRFLCLEFSEVELPVLDKVYDEWSFRAIPRIGKMITGDADSYSYLVESIRKFPKQQDFAAMIEKAGFERVSYRNFTGGIAALHSGWKL</sequence>